<accession>Q1JK54</accession>
<comment type="function">
    <text evidence="1">Removes N-terminal dipeptides sequentially from polypeptides having unsubstituted N-termini provided that the penultimate residue is proline.</text>
</comment>
<comment type="catalytic activity">
    <reaction evidence="1">
        <text>Hydrolyzes Xaa-Pro-|- bonds to release unblocked, N-terminal dipeptides from substrates including Ala-Pro-|-p-nitroanilide and (sequentially) Tyr-Pro-|-Phe-Pro-|-Gly-Pro-|-Ile.</text>
        <dbReference type="EC" id="3.4.14.11"/>
    </reaction>
</comment>
<comment type="subunit">
    <text evidence="1">Homodimer.</text>
</comment>
<comment type="subcellular location">
    <subcellularLocation>
        <location evidence="1">Cytoplasm</location>
    </subcellularLocation>
</comment>
<comment type="similarity">
    <text evidence="1">Belongs to the peptidase S15 family.</text>
</comment>
<proteinExistence type="inferred from homology"/>
<gene>
    <name evidence="1" type="primary">pepX</name>
    <name type="ordered locus">MGAS9429_Spy1582</name>
</gene>
<sequence>MRYNQFSYIPTSLERAAEELKELGFDLDLQKTAKANLESFLRKLFFHYPDSDYPLSHLIAKNDMDALSFFQSEQELSKEVFDLLALQVLGFIPGVDFTEADAFLDKLAFPIHFDETEIIKHIHHLLATRCKSGMTLIDDLVSQGMLTMDNDYHFFNGKSLATFDTSQLIREVVYVEAPLDTDQDGQLDLIKVNIIRPQSQKPLPTLMTPSPYHQGINEVANDKKLYRMEKELVVKKRRQITVEDRDFIPLETQPCKLPIGQNLESFSYINSYSLNDYFLARGFANIYVSGVGTAGSTGFMTSGDYAQIESFKAVIDWLNGRATAYTSHSKTHQVRADWANGLVCTTGKSYLGTMSTGLATTGVDGLAMIIAESAISSWYNYYRENGLVCSPGGYPGEDLDVLTELTYSRNLLAGDYLRHNDHYQELLNQQSQALDRQSGDYNQFWHDRNYLKNAHQIKCDVVYTHGLQDWNVKPRQVYEIFNALPSTINKHLFLHQGEHVYMHNWQSIDFRESMNALLCQKLLGLANDFSLPEMIWQDNTCPQNWQERKVFGTSTIKELDLGQELLLIDNHYGEDEFKAYGKDFRASKAALFKGKANQALIDILLEEDLPINGEIVLQLKVKSSENKGLLSAQILDYGKKKRLGDLPIALTQSSIDNGQNFSREPLKELPFREDSYRVISKGFMNLQNRNNLSSIETIPNNKWMTVRLPLQPTIYHLEKGDTLRVILYTTDFEHTVRDNSNYALTIDLSQSQLIVPIASN</sequence>
<feature type="chain" id="PRO_1000045489" description="Xaa-Pro dipeptidyl-peptidase">
    <location>
        <begin position="1"/>
        <end position="760"/>
    </location>
</feature>
<feature type="active site" description="Charge relay system" evidence="1">
    <location>
        <position position="349"/>
    </location>
</feature>
<feature type="active site" description="Charge relay system" evidence="1">
    <location>
        <position position="469"/>
    </location>
</feature>
<feature type="active site" description="Charge relay system" evidence="1">
    <location>
        <position position="499"/>
    </location>
</feature>
<keyword id="KW-0031">Aminopeptidase</keyword>
<keyword id="KW-0963">Cytoplasm</keyword>
<keyword id="KW-0378">Hydrolase</keyword>
<keyword id="KW-0645">Protease</keyword>
<keyword id="KW-0720">Serine protease</keyword>
<dbReference type="EC" id="3.4.14.11" evidence="1"/>
<dbReference type="EMBL" id="CP000259">
    <property type="protein sequence ID" value="ABF32769.1"/>
    <property type="molecule type" value="Genomic_DNA"/>
</dbReference>
<dbReference type="RefSeq" id="WP_002988216.1">
    <property type="nucleotide sequence ID" value="NC_008021.1"/>
</dbReference>
<dbReference type="SMR" id="Q1JK54"/>
<dbReference type="ESTHER" id="strpy-PEPXP">
    <property type="family name" value="Lactobacillus_peptidase"/>
</dbReference>
<dbReference type="KEGG" id="spk:MGAS9429_Spy1582"/>
<dbReference type="HOGENOM" id="CLU_011800_0_0_9"/>
<dbReference type="Proteomes" id="UP000002433">
    <property type="component" value="Chromosome"/>
</dbReference>
<dbReference type="GO" id="GO:0005737">
    <property type="term" value="C:cytoplasm"/>
    <property type="evidence" value="ECO:0007669"/>
    <property type="project" value="UniProtKB-SubCell"/>
</dbReference>
<dbReference type="GO" id="GO:0004177">
    <property type="term" value="F:aminopeptidase activity"/>
    <property type="evidence" value="ECO:0007669"/>
    <property type="project" value="UniProtKB-KW"/>
</dbReference>
<dbReference type="GO" id="GO:0008239">
    <property type="term" value="F:dipeptidyl-peptidase activity"/>
    <property type="evidence" value="ECO:0007669"/>
    <property type="project" value="UniProtKB-UniRule"/>
</dbReference>
<dbReference type="GO" id="GO:0008236">
    <property type="term" value="F:serine-type peptidase activity"/>
    <property type="evidence" value="ECO:0007669"/>
    <property type="project" value="UniProtKB-KW"/>
</dbReference>
<dbReference type="GO" id="GO:0006508">
    <property type="term" value="P:proteolysis"/>
    <property type="evidence" value="ECO:0007669"/>
    <property type="project" value="UniProtKB-KW"/>
</dbReference>
<dbReference type="Gene3D" id="1.10.246.70">
    <property type="match status" value="1"/>
</dbReference>
<dbReference type="Gene3D" id="3.40.50.1820">
    <property type="entry name" value="alpha/beta hydrolase"/>
    <property type="match status" value="1"/>
</dbReference>
<dbReference type="Gene3D" id="2.60.120.260">
    <property type="entry name" value="Galactose-binding domain-like"/>
    <property type="match status" value="1"/>
</dbReference>
<dbReference type="HAMAP" id="MF_00698">
    <property type="entry name" value="Aminopeptidase_S15"/>
    <property type="match status" value="1"/>
</dbReference>
<dbReference type="InterPro" id="IPR029058">
    <property type="entry name" value="AB_hydrolase_fold"/>
</dbReference>
<dbReference type="InterPro" id="IPR008979">
    <property type="entry name" value="Galactose-bd-like_sf"/>
</dbReference>
<dbReference type="InterPro" id="IPR008252">
    <property type="entry name" value="Pept_S15_Xpro"/>
</dbReference>
<dbReference type="InterPro" id="IPR015251">
    <property type="entry name" value="PepX_N_dom"/>
</dbReference>
<dbReference type="InterPro" id="IPR036313">
    <property type="entry name" value="PepX_N_dom_sf"/>
</dbReference>
<dbReference type="InterPro" id="IPR000383">
    <property type="entry name" value="Xaa-Pro-like_dom"/>
</dbReference>
<dbReference type="InterPro" id="IPR013736">
    <property type="entry name" value="Xaa-Pro_dipept_C"/>
</dbReference>
<dbReference type="InterPro" id="IPR050585">
    <property type="entry name" value="Xaa-Pro_dipeptidyl-ppase/CocE"/>
</dbReference>
<dbReference type="NCBIfam" id="NF003783">
    <property type="entry name" value="PRK05371.1-4"/>
    <property type="match status" value="1"/>
</dbReference>
<dbReference type="PANTHER" id="PTHR43056:SF10">
    <property type="entry name" value="COCE_NOND FAMILY, PUTATIVE (AFU_ORTHOLOGUE AFUA_7G00600)-RELATED"/>
    <property type="match status" value="1"/>
</dbReference>
<dbReference type="PANTHER" id="PTHR43056">
    <property type="entry name" value="PEPTIDASE S9 PROLYL OLIGOPEPTIDASE"/>
    <property type="match status" value="1"/>
</dbReference>
<dbReference type="Pfam" id="PF02129">
    <property type="entry name" value="Peptidase_S15"/>
    <property type="match status" value="1"/>
</dbReference>
<dbReference type="Pfam" id="PF08530">
    <property type="entry name" value="PepX_C"/>
    <property type="match status" value="1"/>
</dbReference>
<dbReference type="Pfam" id="PF09168">
    <property type="entry name" value="PepX_N"/>
    <property type="match status" value="1"/>
</dbReference>
<dbReference type="PRINTS" id="PR00923">
    <property type="entry name" value="LACTOPTASE"/>
</dbReference>
<dbReference type="SMART" id="SM00939">
    <property type="entry name" value="PepX_C"/>
    <property type="match status" value="1"/>
</dbReference>
<dbReference type="SMART" id="SM00940">
    <property type="entry name" value="PepX_N"/>
    <property type="match status" value="1"/>
</dbReference>
<dbReference type="SUPFAM" id="SSF53474">
    <property type="entry name" value="alpha/beta-Hydrolases"/>
    <property type="match status" value="1"/>
</dbReference>
<dbReference type="SUPFAM" id="SSF49785">
    <property type="entry name" value="Galactose-binding domain-like"/>
    <property type="match status" value="1"/>
</dbReference>
<dbReference type="SUPFAM" id="SSF81761">
    <property type="entry name" value="X-Prolyl dipeptidyl aminopeptidase PepX, N-terminal domain"/>
    <property type="match status" value="1"/>
</dbReference>
<organism>
    <name type="scientific">Streptococcus pyogenes serotype M12 (strain MGAS9429)</name>
    <dbReference type="NCBI Taxonomy" id="370551"/>
    <lineage>
        <taxon>Bacteria</taxon>
        <taxon>Bacillati</taxon>
        <taxon>Bacillota</taxon>
        <taxon>Bacilli</taxon>
        <taxon>Lactobacillales</taxon>
        <taxon>Streptococcaceae</taxon>
        <taxon>Streptococcus</taxon>
    </lineage>
</organism>
<reference key="1">
    <citation type="journal article" date="2006" name="Proc. Natl. Acad. Sci. U.S.A.">
        <title>Molecular genetic anatomy of inter- and intraserotype variation in the human bacterial pathogen group A Streptococcus.</title>
        <authorList>
            <person name="Beres S.B."/>
            <person name="Richter E.W."/>
            <person name="Nagiec M.J."/>
            <person name="Sumby P."/>
            <person name="Porcella S.F."/>
            <person name="DeLeo F.R."/>
            <person name="Musser J.M."/>
        </authorList>
    </citation>
    <scope>NUCLEOTIDE SEQUENCE [LARGE SCALE GENOMIC DNA]</scope>
    <source>
        <strain>MGAS9429</strain>
    </source>
</reference>
<name>PEPX_STRPC</name>
<evidence type="ECO:0000255" key="1">
    <source>
        <dbReference type="HAMAP-Rule" id="MF_00698"/>
    </source>
</evidence>
<protein>
    <recommendedName>
        <fullName evidence="1">Xaa-Pro dipeptidyl-peptidase</fullName>
        <ecNumber evidence="1">3.4.14.11</ecNumber>
    </recommendedName>
    <alternativeName>
        <fullName evidence="1">X-Pro dipeptidyl-peptidase</fullName>
    </alternativeName>
    <alternativeName>
        <fullName evidence="1">X-prolyl-dipeptidyl aminopeptidase</fullName>
        <shortName evidence="1">X-PDAP</shortName>
    </alternativeName>
</protein>